<evidence type="ECO:0000250" key="1"/>
<evidence type="ECO:0000255" key="2">
    <source>
        <dbReference type="HAMAP-Rule" id="MF_00768"/>
    </source>
</evidence>
<comment type="function">
    <text evidence="1">Repressor involved in the biosynthesis of the osmoprotectant glycine betaine. It represses transcription of the choline transporter BetT and the genes of BetAB involved in the synthesis of glycine betaine (By similarity).</text>
</comment>
<comment type="pathway">
    <text>Amine and polyamine biosynthesis; betaine biosynthesis via choline pathway [regulation].</text>
</comment>
<name>BETI_ECO8A</name>
<gene>
    <name evidence="2" type="primary">betI</name>
    <name type="ordered locus">ECIAI1_0310</name>
</gene>
<proteinExistence type="inferred from homology"/>
<feature type="chain" id="PRO_1000133661" description="HTH-type transcriptional regulator BetI">
    <location>
        <begin position="1"/>
        <end position="195"/>
    </location>
</feature>
<feature type="domain" description="HTH tetR-type" evidence="2">
    <location>
        <begin position="8"/>
        <end position="68"/>
    </location>
</feature>
<feature type="DNA-binding region" description="H-T-H motif" evidence="2">
    <location>
        <begin position="31"/>
        <end position="50"/>
    </location>
</feature>
<accession>B7M2V7</accession>
<sequence length="195" mass="21791">MPKLGMQSIRRRQLIDATLEAINEVGMHDATIAQIARRAGVSTGIISHYFRDKNGLLEATMRDITSQLRDAVLNRLHALPQGSAEQRLQAIVGGNFDETQVSSAAMKAWLAFWASSMHQPMLYRLQQVSSRRLLSNLVSEFRRELPREQAQEAGYGLAALIDGLWLRAALSGKPLDKPLAHSLTRHFITQHLPTD</sequence>
<keyword id="KW-0238">DNA-binding</keyword>
<keyword id="KW-0678">Repressor</keyword>
<keyword id="KW-0804">Transcription</keyword>
<keyword id="KW-0805">Transcription regulation</keyword>
<dbReference type="EMBL" id="CU928160">
    <property type="protein sequence ID" value="CAQ97184.1"/>
    <property type="molecule type" value="Genomic_DNA"/>
</dbReference>
<dbReference type="RefSeq" id="WP_001351501.1">
    <property type="nucleotide sequence ID" value="NC_011741.1"/>
</dbReference>
<dbReference type="SMR" id="B7M2V7"/>
<dbReference type="KEGG" id="ecr:ECIAI1_0310"/>
<dbReference type="HOGENOM" id="CLU_069356_15_4_6"/>
<dbReference type="UniPathway" id="UPA00529"/>
<dbReference type="GO" id="GO:0003700">
    <property type="term" value="F:DNA-binding transcription factor activity"/>
    <property type="evidence" value="ECO:0007669"/>
    <property type="project" value="UniProtKB-UniRule"/>
</dbReference>
<dbReference type="GO" id="GO:0000976">
    <property type="term" value="F:transcription cis-regulatory region binding"/>
    <property type="evidence" value="ECO:0007669"/>
    <property type="project" value="TreeGrafter"/>
</dbReference>
<dbReference type="GO" id="GO:0019285">
    <property type="term" value="P:glycine betaine biosynthetic process from choline"/>
    <property type="evidence" value="ECO:0007669"/>
    <property type="project" value="UniProtKB-UniRule"/>
</dbReference>
<dbReference type="GO" id="GO:0045892">
    <property type="term" value="P:negative regulation of DNA-templated transcription"/>
    <property type="evidence" value="ECO:0007669"/>
    <property type="project" value="UniProtKB-UniRule"/>
</dbReference>
<dbReference type="FunFam" id="1.10.357.10:FF:000009">
    <property type="entry name" value="HTH-type transcriptional regulator BetI"/>
    <property type="match status" value="1"/>
</dbReference>
<dbReference type="Gene3D" id="1.10.357.10">
    <property type="entry name" value="Tetracycline Repressor, domain 2"/>
    <property type="match status" value="1"/>
</dbReference>
<dbReference type="HAMAP" id="MF_00768">
    <property type="entry name" value="HTH_type_BetI"/>
    <property type="match status" value="1"/>
</dbReference>
<dbReference type="InterPro" id="IPR039538">
    <property type="entry name" value="BetI_C"/>
</dbReference>
<dbReference type="InterPro" id="IPR023772">
    <property type="entry name" value="DNA-bd_HTH_TetR-type_CS"/>
</dbReference>
<dbReference type="InterPro" id="IPR009057">
    <property type="entry name" value="Homeodomain-like_sf"/>
</dbReference>
<dbReference type="InterPro" id="IPR050109">
    <property type="entry name" value="HTH-type_TetR-like_transc_reg"/>
</dbReference>
<dbReference type="InterPro" id="IPR001647">
    <property type="entry name" value="HTH_TetR"/>
</dbReference>
<dbReference type="InterPro" id="IPR036271">
    <property type="entry name" value="Tet_transcr_reg_TetR-rel_C_sf"/>
</dbReference>
<dbReference type="InterPro" id="IPR017757">
    <property type="entry name" value="Tscrpt_rep_BetI"/>
</dbReference>
<dbReference type="NCBIfam" id="TIGR03384">
    <property type="entry name" value="betaine_BetI"/>
    <property type="match status" value="1"/>
</dbReference>
<dbReference type="NCBIfam" id="NF001978">
    <property type="entry name" value="PRK00767.1"/>
    <property type="match status" value="1"/>
</dbReference>
<dbReference type="PANTHER" id="PTHR30055:SF234">
    <property type="entry name" value="HTH-TYPE TRANSCRIPTIONAL REGULATOR BETI"/>
    <property type="match status" value="1"/>
</dbReference>
<dbReference type="PANTHER" id="PTHR30055">
    <property type="entry name" value="HTH-TYPE TRANSCRIPTIONAL REGULATOR RUTR"/>
    <property type="match status" value="1"/>
</dbReference>
<dbReference type="Pfam" id="PF13977">
    <property type="entry name" value="TetR_C_6"/>
    <property type="match status" value="1"/>
</dbReference>
<dbReference type="Pfam" id="PF00440">
    <property type="entry name" value="TetR_N"/>
    <property type="match status" value="1"/>
</dbReference>
<dbReference type="PRINTS" id="PR00455">
    <property type="entry name" value="HTHTETR"/>
</dbReference>
<dbReference type="SUPFAM" id="SSF46689">
    <property type="entry name" value="Homeodomain-like"/>
    <property type="match status" value="1"/>
</dbReference>
<dbReference type="SUPFAM" id="SSF48498">
    <property type="entry name" value="Tetracyclin repressor-like, C-terminal domain"/>
    <property type="match status" value="1"/>
</dbReference>
<dbReference type="PROSITE" id="PS01081">
    <property type="entry name" value="HTH_TETR_1"/>
    <property type="match status" value="1"/>
</dbReference>
<dbReference type="PROSITE" id="PS50977">
    <property type="entry name" value="HTH_TETR_2"/>
    <property type="match status" value="1"/>
</dbReference>
<organism>
    <name type="scientific">Escherichia coli O8 (strain IAI1)</name>
    <dbReference type="NCBI Taxonomy" id="585034"/>
    <lineage>
        <taxon>Bacteria</taxon>
        <taxon>Pseudomonadati</taxon>
        <taxon>Pseudomonadota</taxon>
        <taxon>Gammaproteobacteria</taxon>
        <taxon>Enterobacterales</taxon>
        <taxon>Enterobacteriaceae</taxon>
        <taxon>Escherichia</taxon>
    </lineage>
</organism>
<protein>
    <recommendedName>
        <fullName evidence="2">HTH-type transcriptional regulator BetI</fullName>
    </recommendedName>
</protein>
<reference key="1">
    <citation type="journal article" date="2009" name="PLoS Genet.">
        <title>Organised genome dynamics in the Escherichia coli species results in highly diverse adaptive paths.</title>
        <authorList>
            <person name="Touchon M."/>
            <person name="Hoede C."/>
            <person name="Tenaillon O."/>
            <person name="Barbe V."/>
            <person name="Baeriswyl S."/>
            <person name="Bidet P."/>
            <person name="Bingen E."/>
            <person name="Bonacorsi S."/>
            <person name="Bouchier C."/>
            <person name="Bouvet O."/>
            <person name="Calteau A."/>
            <person name="Chiapello H."/>
            <person name="Clermont O."/>
            <person name="Cruveiller S."/>
            <person name="Danchin A."/>
            <person name="Diard M."/>
            <person name="Dossat C."/>
            <person name="Karoui M.E."/>
            <person name="Frapy E."/>
            <person name="Garry L."/>
            <person name="Ghigo J.M."/>
            <person name="Gilles A.M."/>
            <person name="Johnson J."/>
            <person name="Le Bouguenec C."/>
            <person name="Lescat M."/>
            <person name="Mangenot S."/>
            <person name="Martinez-Jehanne V."/>
            <person name="Matic I."/>
            <person name="Nassif X."/>
            <person name="Oztas S."/>
            <person name="Petit M.A."/>
            <person name="Pichon C."/>
            <person name="Rouy Z."/>
            <person name="Ruf C.S."/>
            <person name="Schneider D."/>
            <person name="Tourret J."/>
            <person name="Vacherie B."/>
            <person name="Vallenet D."/>
            <person name="Medigue C."/>
            <person name="Rocha E.P.C."/>
            <person name="Denamur E."/>
        </authorList>
    </citation>
    <scope>NUCLEOTIDE SEQUENCE [LARGE SCALE GENOMIC DNA]</scope>
    <source>
        <strain>IAI1</strain>
    </source>
</reference>